<keyword id="KW-1015">Disulfide bond</keyword>
<keyword id="KW-0325">Glycoprotein</keyword>
<keyword id="KW-0960">Knottin</keyword>
<keyword id="KW-1185">Reference proteome</keyword>
<keyword id="KW-0964">Secreted</keyword>
<keyword id="KW-0732">Signal</keyword>
<accession>Q1XGV3</accession>
<comment type="function">
    <text evidence="3">Involved in the regulation of melanogenesis. The binding of ASP to MC1R precludes alpha-MSH initiated signaling and thus blocks production of cAMP, leading to a down-regulation of eumelanogenesis (brown/black pigment) and thus increasing synthesis of pheomelanin (yellow/red pigment) (By similarity).</text>
</comment>
<comment type="subcellular location">
    <subcellularLocation>
        <location evidence="2">Secreted</location>
    </subcellularLocation>
</comment>
<comment type="domain">
    <text evidence="1">The presence of a 'disulfide through disulfide knot' structurally defines this protein as a knottin.</text>
</comment>
<dbReference type="EMBL" id="AB236873">
    <property type="protein sequence ID" value="BAE93021.1"/>
    <property type="molecule type" value="Genomic_DNA"/>
</dbReference>
<dbReference type="STRING" id="9541.ENSMFAP00000012079"/>
<dbReference type="GlyCosmos" id="Q1XGV3">
    <property type="glycosylation" value="1 site, No reported glycans"/>
</dbReference>
<dbReference type="eggNOG" id="ENOG502S5XF">
    <property type="taxonomic scope" value="Eukaryota"/>
</dbReference>
<dbReference type="Proteomes" id="UP000233100">
    <property type="component" value="Unplaced"/>
</dbReference>
<dbReference type="GO" id="GO:0005615">
    <property type="term" value="C:extracellular space"/>
    <property type="evidence" value="ECO:0000250"/>
    <property type="project" value="UniProtKB"/>
</dbReference>
<dbReference type="GO" id="GO:0031779">
    <property type="term" value="F:melanocortin receptor binding"/>
    <property type="evidence" value="ECO:0007669"/>
    <property type="project" value="TreeGrafter"/>
</dbReference>
<dbReference type="GO" id="GO:0005184">
    <property type="term" value="F:neuropeptide hormone activity"/>
    <property type="evidence" value="ECO:0007669"/>
    <property type="project" value="TreeGrafter"/>
</dbReference>
<dbReference type="GO" id="GO:0009755">
    <property type="term" value="P:hormone-mediated signaling pathway"/>
    <property type="evidence" value="ECO:0007669"/>
    <property type="project" value="InterPro"/>
</dbReference>
<dbReference type="GO" id="GO:0042438">
    <property type="term" value="P:melanin biosynthetic process"/>
    <property type="evidence" value="ECO:0000250"/>
    <property type="project" value="UniProtKB"/>
</dbReference>
<dbReference type="GO" id="GO:0032438">
    <property type="term" value="P:melanosome organization"/>
    <property type="evidence" value="ECO:0007669"/>
    <property type="project" value="TreeGrafter"/>
</dbReference>
<dbReference type="FunFam" id="4.10.760.10:FF:000002">
    <property type="entry name" value="Agouti-signaling protein"/>
    <property type="match status" value="1"/>
</dbReference>
<dbReference type="Gene3D" id="4.10.760.10">
    <property type="entry name" value="Agouti domain"/>
    <property type="match status" value="1"/>
</dbReference>
<dbReference type="InterPro" id="IPR007733">
    <property type="entry name" value="Agouti"/>
</dbReference>
<dbReference type="InterPro" id="IPR027300">
    <property type="entry name" value="Agouti_dom"/>
</dbReference>
<dbReference type="InterPro" id="IPR036836">
    <property type="entry name" value="Agouti_dom_sf"/>
</dbReference>
<dbReference type="PANTHER" id="PTHR16551">
    <property type="entry name" value="AGOUTI RELATED"/>
    <property type="match status" value="1"/>
</dbReference>
<dbReference type="PANTHER" id="PTHR16551:SF1">
    <property type="entry name" value="AGOUTI-SIGNALING PROTEIN"/>
    <property type="match status" value="1"/>
</dbReference>
<dbReference type="Pfam" id="PF05039">
    <property type="entry name" value="Agouti"/>
    <property type="match status" value="1"/>
</dbReference>
<dbReference type="SMART" id="SM00792">
    <property type="entry name" value="Agouti"/>
    <property type="match status" value="1"/>
</dbReference>
<dbReference type="SUPFAM" id="SSF57055">
    <property type="entry name" value="Agouti-related protein"/>
    <property type="match status" value="1"/>
</dbReference>
<dbReference type="PROSITE" id="PS60024">
    <property type="entry name" value="AGOUTI_1"/>
    <property type="match status" value="1"/>
</dbReference>
<dbReference type="PROSITE" id="PS51150">
    <property type="entry name" value="AGOUTI_2"/>
    <property type="match status" value="1"/>
</dbReference>
<evidence type="ECO:0000250" key="1"/>
<evidence type="ECO:0000250" key="2">
    <source>
        <dbReference type="UniProtKB" id="P42127"/>
    </source>
</evidence>
<evidence type="ECO:0000250" key="3">
    <source>
        <dbReference type="UniProtKB" id="Q03288"/>
    </source>
</evidence>
<evidence type="ECO:0000255" key="4"/>
<evidence type="ECO:0000255" key="5">
    <source>
        <dbReference type="PROSITE-ProRule" id="PRU00494"/>
    </source>
</evidence>
<evidence type="ECO:0000256" key="6">
    <source>
        <dbReference type="SAM" id="MobiDB-lite"/>
    </source>
</evidence>
<feature type="signal peptide" evidence="4">
    <location>
        <begin position="1"/>
        <end position="22"/>
    </location>
</feature>
<feature type="chain" id="PRO_0000235199" description="Agouti-signaling protein">
    <location>
        <begin position="23"/>
        <end position="132"/>
    </location>
</feature>
<feature type="domain" description="Agouti" evidence="5">
    <location>
        <begin position="93"/>
        <end position="132"/>
    </location>
</feature>
<feature type="region of interest" description="Disordered" evidence="6">
    <location>
        <begin position="61"/>
        <end position="87"/>
    </location>
</feature>
<feature type="compositionally biased region" description="Basic and acidic residues" evidence="6">
    <location>
        <begin position="61"/>
        <end position="79"/>
    </location>
</feature>
<feature type="glycosylation site" description="N-linked (GlcNAc...) asparagine" evidence="4">
    <location>
        <position position="39"/>
    </location>
</feature>
<feature type="disulfide bond" evidence="5">
    <location>
        <begin position="93"/>
        <end position="108"/>
    </location>
</feature>
<feature type="disulfide bond" evidence="5">
    <location>
        <begin position="100"/>
        <end position="114"/>
    </location>
</feature>
<feature type="disulfide bond" evidence="5">
    <location>
        <begin position="107"/>
        <end position="125"/>
    </location>
</feature>
<feature type="disulfide bond" evidence="5">
    <location>
        <begin position="111"/>
        <end position="132"/>
    </location>
</feature>
<feature type="disulfide bond" evidence="5">
    <location>
        <begin position="116"/>
        <end position="123"/>
    </location>
</feature>
<reference key="1">
    <citation type="journal article" date="2006" name="Genome Res.">
        <title>Alu-mediated 100-kb deletion in the primate genome: the loss of the agouti signaling protein gene in the lesser apes.</title>
        <authorList>
            <person name="Nakayama K."/>
            <person name="Ishida T."/>
        </authorList>
    </citation>
    <scope>NUCLEOTIDE SEQUENCE [GENOMIC DNA]</scope>
</reference>
<name>ASIP_MACFA</name>
<organism>
    <name type="scientific">Macaca fascicularis</name>
    <name type="common">Crab-eating macaque</name>
    <name type="synonym">Cynomolgus monkey</name>
    <dbReference type="NCBI Taxonomy" id="9541"/>
    <lineage>
        <taxon>Eukaryota</taxon>
        <taxon>Metazoa</taxon>
        <taxon>Chordata</taxon>
        <taxon>Craniata</taxon>
        <taxon>Vertebrata</taxon>
        <taxon>Euteleostomi</taxon>
        <taxon>Mammalia</taxon>
        <taxon>Eutheria</taxon>
        <taxon>Euarchontoglires</taxon>
        <taxon>Primates</taxon>
        <taxon>Haplorrhini</taxon>
        <taxon>Catarrhini</taxon>
        <taxon>Cercopithecidae</taxon>
        <taxon>Cercopithecinae</taxon>
        <taxon>Macaca</taxon>
    </lineage>
</organism>
<gene>
    <name type="primary">ASIP</name>
</gene>
<protein>
    <recommendedName>
        <fullName>Agouti-signaling protein</fullName>
        <shortName>ASP</shortName>
    </recommendedName>
    <alternativeName>
        <fullName>Agouti switch protein</fullName>
    </alternativeName>
</protein>
<sequence>MDVTRLLLATLLVFLCFFTAYSHLPPEEKLRDDRSLRSNSSVNLLDFPSVSIMALNKNSKEISRKEAEKKRSSKKEASMKKVARPRTPLSAPCVATRDSCKPPAPACCDPCASCQCRFFRSACSCRVLSLNC</sequence>
<proteinExistence type="inferred from homology"/>